<evidence type="ECO:0000250" key="1">
    <source>
        <dbReference type="UniProtKB" id="A5F5X0"/>
    </source>
</evidence>
<evidence type="ECO:0000255" key="2">
    <source>
        <dbReference type="HAMAP-Rule" id="MF_00462"/>
    </source>
</evidence>
<evidence type="ECO:0000269" key="3">
    <source>
    </source>
</evidence>
<evidence type="ECO:0000269" key="4">
    <source>
    </source>
</evidence>
<evidence type="ECO:0000305" key="5"/>
<evidence type="ECO:0000305" key="6">
    <source>
    </source>
</evidence>
<evidence type="ECO:0000305" key="7">
    <source>
    </source>
</evidence>
<protein>
    <recommendedName>
        <fullName evidence="2 5">Ion-translocating oxidoreductase complex subunit D</fullName>
        <ecNumber evidence="2 5">7.-.-.-</ecNumber>
    </recommendedName>
    <alternativeName>
        <fullName evidence="2 5">Rnf electron transport complex subunit D</fullName>
    </alternativeName>
</protein>
<dbReference type="EC" id="7.-.-.-" evidence="2 5"/>
<dbReference type="EMBL" id="CP000627">
    <property type="protein sequence ID" value="ABQ21410.1"/>
    <property type="molecule type" value="Genomic_DNA"/>
</dbReference>
<dbReference type="EMBL" id="CP001235">
    <property type="protein sequence ID" value="ACP09041.1"/>
    <property type="molecule type" value="Genomic_DNA"/>
</dbReference>
<dbReference type="SMR" id="A5F2R1"/>
<dbReference type="KEGG" id="vco:VC0395_A0535"/>
<dbReference type="KEGG" id="vcr:VC395_1029"/>
<dbReference type="PATRIC" id="fig|345073.21.peg.999"/>
<dbReference type="eggNOG" id="COG4658">
    <property type="taxonomic scope" value="Bacteria"/>
</dbReference>
<dbReference type="HOGENOM" id="CLU_042020_0_0_6"/>
<dbReference type="OrthoDB" id="9776359at2"/>
<dbReference type="Proteomes" id="UP000000249">
    <property type="component" value="Chromosome 2"/>
</dbReference>
<dbReference type="GO" id="GO:0005886">
    <property type="term" value="C:plasma membrane"/>
    <property type="evidence" value="ECO:0007669"/>
    <property type="project" value="UniProtKB-SubCell"/>
</dbReference>
<dbReference type="GO" id="GO:0022900">
    <property type="term" value="P:electron transport chain"/>
    <property type="evidence" value="ECO:0007669"/>
    <property type="project" value="UniProtKB-UniRule"/>
</dbReference>
<dbReference type="GO" id="GO:0055085">
    <property type="term" value="P:transmembrane transport"/>
    <property type="evidence" value="ECO:0007669"/>
    <property type="project" value="InterPro"/>
</dbReference>
<dbReference type="HAMAP" id="MF_00462">
    <property type="entry name" value="RsxD_RnfD"/>
    <property type="match status" value="1"/>
</dbReference>
<dbReference type="InterPro" id="IPR004338">
    <property type="entry name" value="NqrB/RnfD"/>
</dbReference>
<dbReference type="InterPro" id="IPR011303">
    <property type="entry name" value="RnfD_bac"/>
</dbReference>
<dbReference type="NCBIfam" id="NF002011">
    <property type="entry name" value="PRK00816.1"/>
    <property type="match status" value="1"/>
</dbReference>
<dbReference type="NCBIfam" id="TIGR01946">
    <property type="entry name" value="rnfD"/>
    <property type="match status" value="1"/>
</dbReference>
<dbReference type="PANTHER" id="PTHR30578">
    <property type="entry name" value="ELECTRON TRANSPORT COMPLEX PROTEIN RNFD"/>
    <property type="match status" value="1"/>
</dbReference>
<dbReference type="PANTHER" id="PTHR30578:SF0">
    <property type="entry name" value="ION-TRANSLOCATING OXIDOREDUCTASE COMPLEX SUBUNIT D"/>
    <property type="match status" value="1"/>
</dbReference>
<dbReference type="Pfam" id="PF03116">
    <property type="entry name" value="NQR2_RnfD_RnfE"/>
    <property type="match status" value="1"/>
</dbReference>
<gene>
    <name evidence="2" type="primary">rnfD</name>
    <name type="ordered locus">VC0395_A0535</name>
    <name type="ordered locus">VC395_1029</name>
</gene>
<sequence>MAFFIASSPHLRSKRSTADVMRWVLVCALPGLIAQTYFFGYGTLIQLLLAISVAVALEAGIMLLRKRSPISALRDYSAVVTAWLLAVAIPPLSPWWVVVIGLIFAIVIAKHLYGGLGQNPFNPAMIAYVVLLISFPVQMTSWMAPIKLTAEPSSLVDSFSLIFGGFDSDGLSLQQIRTGIDGITMATPLDAIKTSLKAGHTMSETLTQPQFSGFAGIGWEWVNIAYLLGGLILLKLRIIRWHIPVAMLAGLVFTALLAQLFAPGTTASPMIHLLSGATMLGAFFIATDPVSASTTDKGRLIYGFFIGAMVFLIRSWGGFPDGVAFAVLLANMCVPLIDYYTKPRTYGH</sequence>
<organism>
    <name type="scientific">Vibrio cholerae serotype O1 (strain ATCC 39541 / Classical Ogawa 395 / O395)</name>
    <dbReference type="NCBI Taxonomy" id="345073"/>
    <lineage>
        <taxon>Bacteria</taxon>
        <taxon>Pseudomonadati</taxon>
        <taxon>Pseudomonadota</taxon>
        <taxon>Gammaproteobacteria</taxon>
        <taxon>Vibrionales</taxon>
        <taxon>Vibrionaceae</taxon>
        <taxon>Vibrio</taxon>
    </lineage>
</organism>
<comment type="function">
    <text evidence="2">Part of a membrane-bound complex that couples electron transfer with translocation of ions across the membrane.</text>
</comment>
<comment type="cofactor">
    <cofactor evidence="1 2 6">
        <name>FMN</name>
        <dbReference type="ChEBI" id="CHEBI:58210"/>
    </cofactor>
</comment>
<comment type="subunit">
    <text evidence="2">The complex is composed of six subunits: RnfA, RnfB, RnfC, RnfD, RnfE and RnfG.</text>
</comment>
<comment type="subcellular location">
    <subcellularLocation>
        <location evidence="2 3 4">Cell inner membrane</location>
        <topology evidence="2 3 4">Multi-pass membrane protein</topology>
    </subcellularLocation>
</comment>
<comment type="similarity">
    <text evidence="2">Belongs to the NqrB/RnfD family.</text>
</comment>
<reference key="1">
    <citation type="submission" date="2007-03" db="EMBL/GenBank/DDBJ databases">
        <authorList>
            <person name="Heidelberg J."/>
        </authorList>
    </citation>
    <scope>NUCLEOTIDE SEQUENCE [LARGE SCALE GENOMIC DNA]</scope>
    <source>
        <strain>ATCC 39541 / Classical Ogawa 395 / O395</strain>
    </source>
</reference>
<reference key="2">
    <citation type="journal article" date="2008" name="PLoS ONE">
        <title>A recalibrated molecular clock and independent origins for the cholera pandemic clones.</title>
        <authorList>
            <person name="Feng L."/>
            <person name="Reeves P.R."/>
            <person name="Lan R."/>
            <person name="Ren Y."/>
            <person name="Gao C."/>
            <person name="Zhou Z."/>
            <person name="Ren Y."/>
            <person name="Cheng J."/>
            <person name="Wang W."/>
            <person name="Wang J."/>
            <person name="Qian W."/>
            <person name="Li D."/>
            <person name="Wang L."/>
        </authorList>
    </citation>
    <scope>NUCLEOTIDE SEQUENCE [LARGE SCALE GENOMIC DNA]</scope>
    <source>
        <strain>ATCC 39541 / Classical Ogawa 395 / O395</strain>
    </source>
</reference>
<reference key="3">
    <citation type="journal article" date="2008" name="Biochemistry">
        <title>Covalent binding of flavins to RnfG and RnfD in the Rnf complex from Vibrio cholerae.</title>
        <authorList>
            <person name="Backiel J."/>
            <person name="Juarez O."/>
            <person name="Zagorevski D.V."/>
            <person name="Wang Z."/>
            <person name="Nilges M.J."/>
            <person name="Barquera B."/>
        </authorList>
    </citation>
    <scope>COFACTOR</scope>
    <scope>PROSTHETIC GROUP AT THR-187</scope>
    <scope>SUBCELLULAR LOCATION</scope>
    <scope>TOPOLOGY</scope>
    <scope>MUTAGENESIS OF THR-187 AND THR-278</scope>
    <source>
        <strain>ATCC 39541 / Classical Ogawa 395 / O395</strain>
    </source>
</reference>
<reference key="4">
    <citation type="journal article" date="2015" name="Biochemistry">
        <title>Complete topology of the RNF complex from Vibrio cholerae.</title>
        <authorList>
            <person name="Hreha T.N."/>
            <person name="Mezic K.G."/>
            <person name="Herce H.D."/>
            <person name="Duffy E.B."/>
            <person name="Bourges A."/>
            <person name="Pryshchep S."/>
            <person name="Juarez O."/>
            <person name="Barquera B."/>
        </authorList>
    </citation>
    <scope>SUBCELLULAR LOCATION</scope>
    <scope>TOPOLOGY</scope>
    <source>
        <strain>ATCC 39541 / Classical Ogawa 395 / O395</strain>
    </source>
</reference>
<proteinExistence type="evidence at protein level"/>
<accession>A5F2R1</accession>
<accession>C3LZ25</accession>
<feature type="chain" id="PRO_1000081161" description="Ion-translocating oxidoreductase complex subunit D">
    <location>
        <begin position="1"/>
        <end position="348"/>
    </location>
</feature>
<feature type="topological domain" description="Cytoplasmic" evidence="6 7">
    <location>
        <begin position="1"/>
        <end position="22"/>
    </location>
</feature>
<feature type="transmembrane region" description="Helical" evidence="2">
    <location>
        <begin position="23"/>
        <end position="43"/>
    </location>
</feature>
<feature type="transmembrane region" description="Helical" evidence="2">
    <location>
        <begin position="44"/>
        <end position="64"/>
    </location>
</feature>
<feature type="topological domain" description="Cytoplasmic" evidence="6 7">
    <location>
        <begin position="65"/>
        <end position="71"/>
    </location>
</feature>
<feature type="transmembrane region" description="Helical" evidence="2">
    <location>
        <begin position="72"/>
        <end position="91"/>
    </location>
</feature>
<feature type="topological domain" description="Periplasmic" evidence="3 4">
    <location>
        <begin position="92"/>
        <end position="94"/>
    </location>
</feature>
<feature type="transmembrane region" description="Helical" evidence="2">
    <location>
        <begin position="95"/>
        <end position="117"/>
    </location>
</feature>
<feature type="topological domain" description="Cytoplasmic" evidence="6 7">
    <location>
        <begin position="118"/>
        <end position="125"/>
    </location>
</feature>
<feature type="transmembrane region" description="Helical" evidence="2">
    <location>
        <begin position="126"/>
        <end position="146"/>
    </location>
</feature>
<feature type="topological domain" description="Periplasmic" evidence="6 7">
    <location>
        <begin position="147"/>
        <end position="213"/>
    </location>
</feature>
<feature type="transmembrane region" description="Helical" evidence="2">
    <location>
        <begin position="214"/>
        <end position="234"/>
    </location>
</feature>
<feature type="topological domain" description="Cytoplasmic" evidence="6 7">
    <location>
        <begin position="235"/>
        <end position="242"/>
    </location>
</feature>
<feature type="transmembrane region" description="Helical" evidence="2">
    <location>
        <begin position="243"/>
        <end position="263"/>
    </location>
</feature>
<feature type="topological domain" description="Periplasmic" evidence="4 6">
    <location>
        <begin position="264"/>
        <end position="265"/>
    </location>
</feature>
<feature type="transmembrane region" description="Helical" evidence="2">
    <location>
        <begin position="266"/>
        <end position="286"/>
    </location>
</feature>
<feature type="topological domain" description="Cytoplasmic" evidence="6 7">
    <location>
        <begin position="287"/>
        <end position="299"/>
    </location>
</feature>
<feature type="transmembrane region" description="Helical" evidence="2">
    <location>
        <begin position="300"/>
        <end position="320"/>
    </location>
</feature>
<feature type="transmembrane region" description="Helical" evidence="2">
    <location>
        <begin position="321"/>
        <end position="341"/>
    </location>
</feature>
<feature type="topological domain" description="Cytoplasmic" evidence="3 4">
    <location>
        <begin position="342"/>
        <end position="348"/>
    </location>
</feature>
<feature type="modified residue" description="FMN phosphoryl threonine" evidence="2 6">
    <location>
        <position position="187"/>
    </location>
</feature>
<feature type="mutagenesis site" description="Abolishes flavin binding." evidence="3">
    <original>T</original>
    <variation>V</variation>
    <location>
        <position position="187"/>
    </location>
</feature>
<feature type="mutagenesis site" description="Can still bind flavin." evidence="3">
    <original>T</original>
    <variation>L</variation>
    <location>
        <position position="278"/>
    </location>
</feature>
<keyword id="KW-0997">Cell inner membrane</keyword>
<keyword id="KW-1003">Cell membrane</keyword>
<keyword id="KW-0249">Electron transport</keyword>
<keyword id="KW-0285">Flavoprotein</keyword>
<keyword id="KW-0288">FMN</keyword>
<keyword id="KW-0472">Membrane</keyword>
<keyword id="KW-0597">Phosphoprotein</keyword>
<keyword id="KW-1278">Translocase</keyword>
<keyword id="KW-0812">Transmembrane</keyword>
<keyword id="KW-1133">Transmembrane helix</keyword>
<keyword id="KW-0813">Transport</keyword>
<name>RNFD_VIBC3</name>